<reference key="1">
    <citation type="journal article" date="2010" name="J. Bacteriol.">
        <title>The genome of the amoeba symbiont 'Candidatus Amoebophilus asiaticus' reveals common mechanisms for host cell interaction among amoeba-associated bacteria.</title>
        <authorList>
            <person name="Schmitz-Esser S."/>
            <person name="Tischler P."/>
            <person name="Arnold R."/>
            <person name="Montanaro J."/>
            <person name="Wagner M."/>
            <person name="Rattei T."/>
            <person name="Horn M."/>
        </authorList>
    </citation>
    <scope>NUCLEOTIDE SEQUENCE [LARGE SCALE GENOMIC DNA]</scope>
    <source>
        <strain>5a2</strain>
    </source>
</reference>
<accession>B3ER64</accession>
<feature type="chain" id="PRO_1000215544" description="Proline--tRNA ligase">
    <location>
        <begin position="1"/>
        <end position="491"/>
    </location>
</feature>
<keyword id="KW-0030">Aminoacyl-tRNA synthetase</keyword>
<keyword id="KW-0067">ATP-binding</keyword>
<keyword id="KW-0963">Cytoplasm</keyword>
<keyword id="KW-0436">Ligase</keyword>
<keyword id="KW-0547">Nucleotide-binding</keyword>
<keyword id="KW-0648">Protein biosynthesis</keyword>
<keyword id="KW-1185">Reference proteome</keyword>
<evidence type="ECO:0000255" key="1">
    <source>
        <dbReference type="HAMAP-Rule" id="MF_01571"/>
    </source>
</evidence>
<proteinExistence type="inferred from homology"/>
<sequence length="491" mass="56331">MHKKLPTRAENFSEWYNEIIKRAELAENAAVRGCMTIRPYGFAIWEKMQAILDKAFKATGHENAYFPIFIPKSYLNREAAHVEGFAKECAVVTHYRLKATEDGQQVVVDPSAKLEEELIVRPTSETIIWNSYKNWIQSYRDLPLLINQWCNVVRWEMRTRLFLRTAEFLWQEGHTAHATQAEAEQEALQMLNIYADFGKDYLAIPFLKGIKTEHERFAGAEETYTIEALMQDGKALQAGTSHFLGQRFAKAFEVTFTNQAGQLDYVWGTSWGLTTRLIGALVMTHSDDKGLVLPPRVAPIQIVIIPIYRTQEEKEAIQQQAQHIQQQLIAHNISAKLDGRDEHKPGWKFAEYELKGVPIRMAIGPNDLANNTVELTRRDTSEKTTVPTDNIIVVVKSMLDSIHDNLYQRAYEFREQNTYQVNSYEEFKTAISQKRGFILAHWDGTKETERQIHAETKATIRCIPLEVNTEPGVCIYTGKPSKQRVVFGQAY</sequence>
<name>SYP_AMOA5</name>
<dbReference type="EC" id="6.1.1.15" evidence="1"/>
<dbReference type="EMBL" id="CP001102">
    <property type="protein sequence ID" value="ACE05716.1"/>
    <property type="molecule type" value="Genomic_DNA"/>
</dbReference>
<dbReference type="RefSeq" id="WP_012472478.1">
    <property type="nucleotide sequence ID" value="NC_010830.1"/>
</dbReference>
<dbReference type="SMR" id="B3ER64"/>
<dbReference type="STRING" id="452471.Aasi_0277"/>
<dbReference type="KEGG" id="aas:Aasi_0277"/>
<dbReference type="eggNOG" id="COG0442">
    <property type="taxonomic scope" value="Bacteria"/>
</dbReference>
<dbReference type="HOGENOM" id="CLU_001882_4_2_10"/>
<dbReference type="OrthoDB" id="9809052at2"/>
<dbReference type="Proteomes" id="UP000001227">
    <property type="component" value="Chromosome"/>
</dbReference>
<dbReference type="GO" id="GO:0017101">
    <property type="term" value="C:aminoacyl-tRNA synthetase multienzyme complex"/>
    <property type="evidence" value="ECO:0007669"/>
    <property type="project" value="TreeGrafter"/>
</dbReference>
<dbReference type="GO" id="GO:0005737">
    <property type="term" value="C:cytoplasm"/>
    <property type="evidence" value="ECO:0007669"/>
    <property type="project" value="UniProtKB-SubCell"/>
</dbReference>
<dbReference type="GO" id="GO:0005524">
    <property type="term" value="F:ATP binding"/>
    <property type="evidence" value="ECO:0007669"/>
    <property type="project" value="UniProtKB-UniRule"/>
</dbReference>
<dbReference type="GO" id="GO:0004827">
    <property type="term" value="F:proline-tRNA ligase activity"/>
    <property type="evidence" value="ECO:0007669"/>
    <property type="project" value="UniProtKB-UniRule"/>
</dbReference>
<dbReference type="GO" id="GO:0006433">
    <property type="term" value="P:prolyl-tRNA aminoacylation"/>
    <property type="evidence" value="ECO:0007669"/>
    <property type="project" value="UniProtKB-UniRule"/>
</dbReference>
<dbReference type="CDD" id="cd00862">
    <property type="entry name" value="ProRS_anticodon_zinc"/>
    <property type="match status" value="1"/>
</dbReference>
<dbReference type="CDD" id="cd00778">
    <property type="entry name" value="ProRS_core_arch_euk"/>
    <property type="match status" value="1"/>
</dbReference>
<dbReference type="FunFam" id="3.40.50.800:FF:000005">
    <property type="entry name" value="bifunctional glutamate/proline--tRNA ligase"/>
    <property type="match status" value="1"/>
</dbReference>
<dbReference type="FunFam" id="3.30.930.10:FF:000023">
    <property type="entry name" value="Proline--tRNA ligase"/>
    <property type="match status" value="1"/>
</dbReference>
<dbReference type="Gene3D" id="3.40.50.800">
    <property type="entry name" value="Anticodon-binding domain"/>
    <property type="match status" value="1"/>
</dbReference>
<dbReference type="Gene3D" id="3.30.930.10">
    <property type="entry name" value="Bira Bifunctional Protein, Domain 2"/>
    <property type="match status" value="1"/>
</dbReference>
<dbReference type="Gene3D" id="3.30.110.30">
    <property type="entry name" value="C-terminal domain of ProRS"/>
    <property type="match status" value="1"/>
</dbReference>
<dbReference type="HAMAP" id="MF_01571">
    <property type="entry name" value="Pro_tRNA_synth_type3"/>
    <property type="match status" value="1"/>
</dbReference>
<dbReference type="InterPro" id="IPR002314">
    <property type="entry name" value="aa-tRNA-synt_IIb"/>
</dbReference>
<dbReference type="InterPro" id="IPR006195">
    <property type="entry name" value="aa-tRNA-synth_II"/>
</dbReference>
<dbReference type="InterPro" id="IPR045864">
    <property type="entry name" value="aa-tRNA-synth_II/BPL/LPL"/>
</dbReference>
<dbReference type="InterPro" id="IPR004154">
    <property type="entry name" value="Anticodon-bd"/>
</dbReference>
<dbReference type="InterPro" id="IPR036621">
    <property type="entry name" value="Anticodon-bd_dom_sf"/>
</dbReference>
<dbReference type="InterPro" id="IPR004499">
    <property type="entry name" value="Pro-tRNA-ligase_IIa_arc-type"/>
</dbReference>
<dbReference type="InterPro" id="IPR016061">
    <property type="entry name" value="Pro-tRNA_ligase_II_C"/>
</dbReference>
<dbReference type="InterPro" id="IPR017449">
    <property type="entry name" value="Pro-tRNA_synth_II"/>
</dbReference>
<dbReference type="InterPro" id="IPR033721">
    <property type="entry name" value="ProRS_core_arch_euk"/>
</dbReference>
<dbReference type="NCBIfam" id="TIGR00408">
    <property type="entry name" value="proS_fam_I"/>
    <property type="match status" value="1"/>
</dbReference>
<dbReference type="PANTHER" id="PTHR43382:SF2">
    <property type="entry name" value="BIFUNCTIONAL GLUTAMATE_PROLINE--TRNA LIGASE"/>
    <property type="match status" value="1"/>
</dbReference>
<dbReference type="PANTHER" id="PTHR43382">
    <property type="entry name" value="PROLYL-TRNA SYNTHETASE"/>
    <property type="match status" value="1"/>
</dbReference>
<dbReference type="Pfam" id="PF03129">
    <property type="entry name" value="HGTP_anticodon"/>
    <property type="match status" value="1"/>
</dbReference>
<dbReference type="Pfam" id="PF09180">
    <property type="entry name" value="ProRS-C_1"/>
    <property type="match status" value="1"/>
</dbReference>
<dbReference type="Pfam" id="PF00587">
    <property type="entry name" value="tRNA-synt_2b"/>
    <property type="match status" value="1"/>
</dbReference>
<dbReference type="SMART" id="SM00946">
    <property type="entry name" value="ProRS-C_1"/>
    <property type="match status" value="1"/>
</dbReference>
<dbReference type="SUPFAM" id="SSF64586">
    <property type="entry name" value="C-terminal domain of ProRS"/>
    <property type="match status" value="1"/>
</dbReference>
<dbReference type="SUPFAM" id="SSF52954">
    <property type="entry name" value="Class II aaRS ABD-related"/>
    <property type="match status" value="1"/>
</dbReference>
<dbReference type="SUPFAM" id="SSF55681">
    <property type="entry name" value="Class II aaRS and biotin synthetases"/>
    <property type="match status" value="1"/>
</dbReference>
<dbReference type="PROSITE" id="PS50862">
    <property type="entry name" value="AA_TRNA_LIGASE_II"/>
    <property type="match status" value="1"/>
</dbReference>
<gene>
    <name evidence="1" type="primary">proS</name>
    <name type="ordered locus">Aasi_0277</name>
</gene>
<protein>
    <recommendedName>
        <fullName evidence="1">Proline--tRNA ligase</fullName>
        <ecNumber evidence="1">6.1.1.15</ecNumber>
    </recommendedName>
    <alternativeName>
        <fullName evidence="1">Prolyl-tRNA synthetase</fullName>
        <shortName evidence="1">ProRS</shortName>
    </alternativeName>
</protein>
<comment type="function">
    <text evidence="1">Catalyzes the attachment of proline to tRNA(Pro) in a two-step reaction: proline is first activated by ATP to form Pro-AMP and then transferred to the acceptor end of tRNA(Pro).</text>
</comment>
<comment type="catalytic activity">
    <reaction evidence="1">
        <text>tRNA(Pro) + L-proline + ATP = L-prolyl-tRNA(Pro) + AMP + diphosphate</text>
        <dbReference type="Rhea" id="RHEA:14305"/>
        <dbReference type="Rhea" id="RHEA-COMP:9700"/>
        <dbReference type="Rhea" id="RHEA-COMP:9702"/>
        <dbReference type="ChEBI" id="CHEBI:30616"/>
        <dbReference type="ChEBI" id="CHEBI:33019"/>
        <dbReference type="ChEBI" id="CHEBI:60039"/>
        <dbReference type="ChEBI" id="CHEBI:78442"/>
        <dbReference type="ChEBI" id="CHEBI:78532"/>
        <dbReference type="ChEBI" id="CHEBI:456215"/>
        <dbReference type="EC" id="6.1.1.15"/>
    </reaction>
</comment>
<comment type="subunit">
    <text evidence="1">Homodimer.</text>
</comment>
<comment type="subcellular location">
    <subcellularLocation>
        <location evidence="1">Cytoplasm</location>
    </subcellularLocation>
</comment>
<comment type="domain">
    <text evidence="1">Consists of three domains: the N-terminal catalytic domain, the anticodon-binding domain and the C-terminal extension.</text>
</comment>
<comment type="similarity">
    <text evidence="1">Belongs to the class-II aminoacyl-tRNA synthetase family. ProS type 3 subfamily.</text>
</comment>
<organism>
    <name type="scientific">Amoebophilus asiaticus (strain 5a2)</name>
    <dbReference type="NCBI Taxonomy" id="452471"/>
    <lineage>
        <taxon>Bacteria</taxon>
        <taxon>Pseudomonadati</taxon>
        <taxon>Bacteroidota</taxon>
        <taxon>Cytophagia</taxon>
        <taxon>Cytophagales</taxon>
        <taxon>Amoebophilaceae</taxon>
        <taxon>Candidatus Amoebophilus</taxon>
    </lineage>
</organism>